<dbReference type="EMBL" id="AE014074">
    <property type="protein sequence ID" value="AAM78661.1"/>
    <property type="molecule type" value="Genomic_DNA"/>
</dbReference>
<dbReference type="RefSeq" id="WP_002987748.1">
    <property type="nucleotide sequence ID" value="NC_004070.1"/>
</dbReference>
<dbReference type="SMR" id="P0DF00"/>
<dbReference type="GeneID" id="69900040"/>
<dbReference type="KEGG" id="spg:SpyM3_0054"/>
<dbReference type="HOGENOM" id="CLU_098428_0_2_9"/>
<dbReference type="Proteomes" id="UP000000564">
    <property type="component" value="Chromosome"/>
</dbReference>
<dbReference type="GO" id="GO:1990904">
    <property type="term" value="C:ribonucleoprotein complex"/>
    <property type="evidence" value="ECO:0007669"/>
    <property type="project" value="UniProtKB-KW"/>
</dbReference>
<dbReference type="GO" id="GO:0005840">
    <property type="term" value="C:ribosome"/>
    <property type="evidence" value="ECO:0007669"/>
    <property type="project" value="UniProtKB-KW"/>
</dbReference>
<dbReference type="GO" id="GO:0019843">
    <property type="term" value="F:rRNA binding"/>
    <property type="evidence" value="ECO:0007669"/>
    <property type="project" value="UniProtKB-UniRule"/>
</dbReference>
<dbReference type="GO" id="GO:0003735">
    <property type="term" value="F:structural constituent of ribosome"/>
    <property type="evidence" value="ECO:0007669"/>
    <property type="project" value="InterPro"/>
</dbReference>
<dbReference type="GO" id="GO:0006412">
    <property type="term" value="P:translation"/>
    <property type="evidence" value="ECO:0007669"/>
    <property type="project" value="UniProtKB-UniRule"/>
</dbReference>
<dbReference type="FunFam" id="3.30.1370.30:FF:000002">
    <property type="entry name" value="30S ribosomal protein S8"/>
    <property type="match status" value="1"/>
</dbReference>
<dbReference type="FunFam" id="3.30.1490.10:FF:000001">
    <property type="entry name" value="30S ribosomal protein S8"/>
    <property type="match status" value="1"/>
</dbReference>
<dbReference type="Gene3D" id="3.30.1370.30">
    <property type="match status" value="1"/>
</dbReference>
<dbReference type="Gene3D" id="3.30.1490.10">
    <property type="match status" value="1"/>
</dbReference>
<dbReference type="HAMAP" id="MF_01302_B">
    <property type="entry name" value="Ribosomal_uS8_B"/>
    <property type="match status" value="1"/>
</dbReference>
<dbReference type="InterPro" id="IPR000630">
    <property type="entry name" value="Ribosomal_uS8"/>
</dbReference>
<dbReference type="InterPro" id="IPR047863">
    <property type="entry name" value="Ribosomal_uS8_CS"/>
</dbReference>
<dbReference type="InterPro" id="IPR035987">
    <property type="entry name" value="Ribosomal_uS8_sf"/>
</dbReference>
<dbReference type="NCBIfam" id="NF001109">
    <property type="entry name" value="PRK00136.1"/>
    <property type="match status" value="1"/>
</dbReference>
<dbReference type="PANTHER" id="PTHR11758">
    <property type="entry name" value="40S RIBOSOMAL PROTEIN S15A"/>
    <property type="match status" value="1"/>
</dbReference>
<dbReference type="Pfam" id="PF00410">
    <property type="entry name" value="Ribosomal_S8"/>
    <property type="match status" value="1"/>
</dbReference>
<dbReference type="SUPFAM" id="SSF56047">
    <property type="entry name" value="Ribosomal protein S8"/>
    <property type="match status" value="1"/>
</dbReference>
<dbReference type="PROSITE" id="PS00053">
    <property type="entry name" value="RIBOSOMAL_S8"/>
    <property type="match status" value="1"/>
</dbReference>
<evidence type="ECO:0000255" key="1">
    <source>
        <dbReference type="HAMAP-Rule" id="MF_01302"/>
    </source>
</evidence>
<evidence type="ECO:0000305" key="2"/>
<name>RS8_STRP3</name>
<proteinExistence type="inferred from homology"/>
<feature type="chain" id="PRO_0000126499" description="Small ribosomal subunit protein uS8">
    <location>
        <begin position="1"/>
        <end position="132"/>
    </location>
</feature>
<keyword id="KW-0687">Ribonucleoprotein</keyword>
<keyword id="KW-0689">Ribosomal protein</keyword>
<keyword id="KW-0694">RNA-binding</keyword>
<keyword id="KW-0699">rRNA-binding</keyword>
<protein>
    <recommendedName>
        <fullName evidence="1">Small ribosomal subunit protein uS8</fullName>
    </recommendedName>
    <alternativeName>
        <fullName evidence="2">30S ribosomal protein S8</fullName>
    </alternativeName>
</protein>
<comment type="function">
    <text evidence="1">One of the primary rRNA binding proteins, it binds directly to 16S rRNA central domain where it helps coordinate assembly of the platform of the 30S subunit.</text>
</comment>
<comment type="subunit">
    <text evidence="1">Part of the 30S ribosomal subunit. Contacts proteins S5 and S12.</text>
</comment>
<comment type="similarity">
    <text evidence="1">Belongs to the universal ribosomal protein uS8 family.</text>
</comment>
<sequence length="132" mass="14802">MVMTDPIADFLTRIRNANQVKHEVLEVPASNIKKGIAEILKREGFVKNVEVIEDDKQGIIRVFLKYGKNGERVITNLKRISKPGLRVYAKRDDMPKVLNGLGIAIISTSEGLLTDKEARQKNVGGEVIAYVW</sequence>
<gene>
    <name evidence="1" type="primary">rpsH</name>
    <name type="ordered locus">SpyM3_0054</name>
</gene>
<reference key="1">
    <citation type="journal article" date="2002" name="Proc. Natl. Acad. Sci. U.S.A.">
        <title>Genome sequence of a serotype M3 strain of group A Streptococcus: phage-encoded toxins, the high-virulence phenotype, and clone emergence.</title>
        <authorList>
            <person name="Beres S.B."/>
            <person name="Sylva G.L."/>
            <person name="Barbian K.D."/>
            <person name="Lei B."/>
            <person name="Hoff J.S."/>
            <person name="Mammarella N.D."/>
            <person name="Liu M.-Y."/>
            <person name="Smoot J.C."/>
            <person name="Porcella S.F."/>
            <person name="Parkins L.D."/>
            <person name="Campbell D.S."/>
            <person name="Smith T.M."/>
            <person name="McCormick J.K."/>
            <person name="Leung D.Y.M."/>
            <person name="Schlievert P.M."/>
            <person name="Musser J.M."/>
        </authorList>
    </citation>
    <scope>NUCLEOTIDE SEQUENCE [LARGE SCALE GENOMIC DNA]</scope>
    <source>
        <strain>ATCC BAA-595 / MGAS315</strain>
    </source>
</reference>
<organism>
    <name type="scientific">Streptococcus pyogenes serotype M3 (strain ATCC BAA-595 / MGAS315)</name>
    <dbReference type="NCBI Taxonomy" id="198466"/>
    <lineage>
        <taxon>Bacteria</taxon>
        <taxon>Bacillati</taxon>
        <taxon>Bacillota</taxon>
        <taxon>Bacilli</taxon>
        <taxon>Lactobacillales</taxon>
        <taxon>Streptococcaceae</taxon>
        <taxon>Streptococcus</taxon>
    </lineage>
</organism>
<accession>P0DF00</accession>
<accession>P66635</accession>
<accession>Q9A1W0</accession>